<gene>
    <name evidence="1" type="primary">lipA</name>
    <name type="ordered locus">SAOUHSC_00861</name>
</gene>
<reference key="1">
    <citation type="book" date="2006" name="Gram positive pathogens, 2nd edition">
        <title>The Staphylococcus aureus NCTC 8325 genome.</title>
        <editorList>
            <person name="Fischetti V."/>
            <person name="Novick R."/>
            <person name="Ferretti J."/>
            <person name="Portnoy D."/>
            <person name="Rood J."/>
        </editorList>
        <authorList>
            <person name="Gillaspy A.F."/>
            <person name="Worrell V."/>
            <person name="Orvis J."/>
            <person name="Roe B.A."/>
            <person name="Dyer D.W."/>
            <person name="Iandolo J.J."/>
        </authorList>
    </citation>
    <scope>NUCLEOTIDE SEQUENCE [LARGE SCALE GENOMIC DNA]</scope>
    <source>
        <strain>NCTC 8325 / PS 47</strain>
    </source>
</reference>
<proteinExistence type="inferred from homology"/>
<name>LIPA_STAA8</name>
<accession>Q2FZX4</accession>
<protein>
    <recommendedName>
        <fullName evidence="1">Lipoyl synthase</fullName>
        <ecNumber evidence="1">2.8.1.8</ecNumber>
    </recommendedName>
    <alternativeName>
        <fullName evidence="1">Lip-syn</fullName>
        <shortName evidence="1">LS</shortName>
    </alternativeName>
    <alternativeName>
        <fullName evidence="1">Lipoate synthase</fullName>
    </alternativeName>
    <alternativeName>
        <fullName evidence="1">Lipoic acid synthase</fullName>
    </alternativeName>
    <alternativeName>
        <fullName evidence="1">Sulfur insertion protein LipA</fullName>
    </alternativeName>
</protein>
<keyword id="KW-0004">4Fe-4S</keyword>
<keyword id="KW-0963">Cytoplasm</keyword>
<keyword id="KW-0408">Iron</keyword>
<keyword id="KW-0411">Iron-sulfur</keyword>
<keyword id="KW-0479">Metal-binding</keyword>
<keyword id="KW-1185">Reference proteome</keyword>
<keyword id="KW-0949">S-adenosyl-L-methionine</keyword>
<keyword id="KW-0808">Transferase</keyword>
<evidence type="ECO:0000255" key="1">
    <source>
        <dbReference type="HAMAP-Rule" id="MF_00206"/>
    </source>
</evidence>
<evidence type="ECO:0000255" key="2">
    <source>
        <dbReference type="PROSITE-ProRule" id="PRU01266"/>
    </source>
</evidence>
<evidence type="ECO:0000256" key="3">
    <source>
        <dbReference type="SAM" id="MobiDB-lite"/>
    </source>
</evidence>
<comment type="function">
    <text evidence="1">Catalyzes the radical-mediated insertion of two sulfur atoms into the C-6 and C-8 positions of the octanoyl moiety bound to the lipoyl domains of lipoate-dependent enzymes, thereby converting the octanoylated domains into lipoylated derivatives.</text>
</comment>
<comment type="catalytic activity">
    <reaction evidence="1">
        <text>[[Fe-S] cluster scaffold protein carrying a second [4Fe-4S](2+) cluster] + N(6)-octanoyl-L-lysyl-[protein] + 2 oxidized [2Fe-2S]-[ferredoxin] + 2 S-adenosyl-L-methionine + 4 H(+) = [[Fe-S] cluster scaffold protein] + N(6)-[(R)-dihydrolipoyl]-L-lysyl-[protein] + 4 Fe(3+) + 2 hydrogen sulfide + 2 5'-deoxyadenosine + 2 L-methionine + 2 reduced [2Fe-2S]-[ferredoxin]</text>
        <dbReference type="Rhea" id="RHEA:16585"/>
        <dbReference type="Rhea" id="RHEA-COMP:9928"/>
        <dbReference type="Rhea" id="RHEA-COMP:10000"/>
        <dbReference type="Rhea" id="RHEA-COMP:10001"/>
        <dbReference type="Rhea" id="RHEA-COMP:10475"/>
        <dbReference type="Rhea" id="RHEA-COMP:14568"/>
        <dbReference type="Rhea" id="RHEA-COMP:14569"/>
        <dbReference type="ChEBI" id="CHEBI:15378"/>
        <dbReference type="ChEBI" id="CHEBI:17319"/>
        <dbReference type="ChEBI" id="CHEBI:29034"/>
        <dbReference type="ChEBI" id="CHEBI:29919"/>
        <dbReference type="ChEBI" id="CHEBI:33722"/>
        <dbReference type="ChEBI" id="CHEBI:33737"/>
        <dbReference type="ChEBI" id="CHEBI:33738"/>
        <dbReference type="ChEBI" id="CHEBI:57844"/>
        <dbReference type="ChEBI" id="CHEBI:59789"/>
        <dbReference type="ChEBI" id="CHEBI:78809"/>
        <dbReference type="ChEBI" id="CHEBI:83100"/>
        <dbReference type="EC" id="2.8.1.8"/>
    </reaction>
</comment>
<comment type="cofactor">
    <cofactor evidence="1">
        <name>[4Fe-4S] cluster</name>
        <dbReference type="ChEBI" id="CHEBI:49883"/>
    </cofactor>
    <text evidence="1">Binds 2 [4Fe-4S] clusters per subunit. One cluster is coordinated with 3 cysteines and an exchangeable S-adenosyl-L-methionine.</text>
</comment>
<comment type="pathway">
    <text evidence="1">Protein modification; protein lipoylation via endogenous pathway; protein N(6)-(lipoyl)lysine from octanoyl-[acyl-carrier-protein].</text>
</comment>
<comment type="subcellular location">
    <subcellularLocation>
        <location evidence="1">Cytoplasm</location>
    </subcellularLocation>
</comment>
<comment type="similarity">
    <text evidence="1">Belongs to the radical SAM superfamily. Lipoyl synthase family.</text>
</comment>
<feature type="chain" id="PRO_1000012289" description="Lipoyl synthase">
    <location>
        <begin position="1"/>
        <end position="305"/>
    </location>
</feature>
<feature type="domain" description="Radical SAM core" evidence="2">
    <location>
        <begin position="54"/>
        <end position="270"/>
    </location>
</feature>
<feature type="region of interest" description="Disordered" evidence="3">
    <location>
        <begin position="283"/>
        <end position="305"/>
    </location>
</feature>
<feature type="compositionally biased region" description="Basic and acidic residues" evidence="3">
    <location>
        <begin position="283"/>
        <end position="298"/>
    </location>
</feature>
<feature type="binding site" evidence="1">
    <location>
        <position position="41"/>
    </location>
    <ligand>
        <name>[4Fe-4S] cluster</name>
        <dbReference type="ChEBI" id="CHEBI:49883"/>
        <label>1</label>
    </ligand>
</feature>
<feature type="binding site" evidence="1">
    <location>
        <position position="46"/>
    </location>
    <ligand>
        <name>[4Fe-4S] cluster</name>
        <dbReference type="ChEBI" id="CHEBI:49883"/>
        <label>1</label>
    </ligand>
</feature>
<feature type="binding site" evidence="1">
    <location>
        <position position="52"/>
    </location>
    <ligand>
        <name>[4Fe-4S] cluster</name>
        <dbReference type="ChEBI" id="CHEBI:49883"/>
        <label>1</label>
    </ligand>
</feature>
<feature type="binding site" evidence="1">
    <location>
        <position position="68"/>
    </location>
    <ligand>
        <name>[4Fe-4S] cluster</name>
        <dbReference type="ChEBI" id="CHEBI:49883"/>
        <label>2</label>
        <note>4Fe-4S-S-AdoMet</note>
    </ligand>
</feature>
<feature type="binding site" evidence="1">
    <location>
        <position position="72"/>
    </location>
    <ligand>
        <name>[4Fe-4S] cluster</name>
        <dbReference type="ChEBI" id="CHEBI:49883"/>
        <label>2</label>
        <note>4Fe-4S-S-AdoMet</note>
    </ligand>
</feature>
<feature type="binding site" evidence="1">
    <location>
        <position position="75"/>
    </location>
    <ligand>
        <name>[4Fe-4S] cluster</name>
        <dbReference type="ChEBI" id="CHEBI:49883"/>
        <label>2</label>
        <note>4Fe-4S-S-AdoMet</note>
    </ligand>
</feature>
<feature type="binding site" evidence="1">
    <location>
        <position position="281"/>
    </location>
    <ligand>
        <name>[4Fe-4S] cluster</name>
        <dbReference type="ChEBI" id="CHEBI:49883"/>
        <label>1</label>
    </ligand>
</feature>
<organism>
    <name type="scientific">Staphylococcus aureus (strain NCTC 8325 / PS 47)</name>
    <dbReference type="NCBI Taxonomy" id="93061"/>
    <lineage>
        <taxon>Bacteria</taxon>
        <taxon>Bacillati</taxon>
        <taxon>Bacillota</taxon>
        <taxon>Bacilli</taxon>
        <taxon>Bacillales</taxon>
        <taxon>Staphylococcaceae</taxon>
        <taxon>Staphylococcus</taxon>
    </lineage>
</organism>
<sequence>MATKNEEILRKPDWLKIKLNTNENYTGLKKMMREKNLNTVCEEAKCPNIHECWGARRTATFMILGAVCTRACRFCAVKTGLPNELDLNEPERVAESVELMNLKHVVITAVARDDLRDAGSNVYAETVRKVRERNPFTTIEILPSDMGGDYDALETLMASRPDILNHNIETVRRLTPRVRARATYDRTLEFLRRSKELQPDIPTKSSIMVGLGETIEEIYETMDDLRANDVDILTIGQYLQPSRKHLKVQKYYTPLEFGKLRKVAMDKGFKHCQAGPLVRSSYHADEQVNEAAKEKQRQGEAQLNS</sequence>
<dbReference type="EC" id="2.8.1.8" evidence="1"/>
<dbReference type="EMBL" id="CP000253">
    <property type="protein sequence ID" value="ABD29986.1"/>
    <property type="molecule type" value="Genomic_DNA"/>
</dbReference>
<dbReference type="RefSeq" id="WP_000201875.1">
    <property type="nucleotide sequence ID" value="NZ_LS483365.1"/>
</dbReference>
<dbReference type="RefSeq" id="YP_499414.1">
    <property type="nucleotide sequence ID" value="NC_007795.1"/>
</dbReference>
<dbReference type="SMR" id="Q2FZX4"/>
<dbReference type="STRING" id="93061.SAOUHSC_00861"/>
<dbReference type="PaxDb" id="1280-SAXN108_0920"/>
<dbReference type="GeneID" id="3918991"/>
<dbReference type="GeneID" id="98345243"/>
<dbReference type="KEGG" id="sao:SAOUHSC_00861"/>
<dbReference type="PATRIC" id="fig|93061.5.peg.782"/>
<dbReference type="eggNOG" id="COG0320">
    <property type="taxonomic scope" value="Bacteria"/>
</dbReference>
<dbReference type="HOGENOM" id="CLU_033144_2_1_9"/>
<dbReference type="OrthoDB" id="9787898at2"/>
<dbReference type="PRO" id="PR:Q2FZX4"/>
<dbReference type="Proteomes" id="UP000008816">
    <property type="component" value="Chromosome"/>
</dbReference>
<dbReference type="GO" id="GO:0005737">
    <property type="term" value="C:cytoplasm"/>
    <property type="evidence" value="ECO:0007669"/>
    <property type="project" value="UniProtKB-SubCell"/>
</dbReference>
<dbReference type="GO" id="GO:0051539">
    <property type="term" value="F:4 iron, 4 sulfur cluster binding"/>
    <property type="evidence" value="ECO:0007669"/>
    <property type="project" value="UniProtKB-UniRule"/>
</dbReference>
<dbReference type="GO" id="GO:0016992">
    <property type="term" value="F:lipoate synthase activity"/>
    <property type="evidence" value="ECO:0007669"/>
    <property type="project" value="UniProtKB-UniRule"/>
</dbReference>
<dbReference type="GO" id="GO:0046872">
    <property type="term" value="F:metal ion binding"/>
    <property type="evidence" value="ECO:0007669"/>
    <property type="project" value="UniProtKB-KW"/>
</dbReference>
<dbReference type="CDD" id="cd01335">
    <property type="entry name" value="Radical_SAM"/>
    <property type="match status" value="1"/>
</dbReference>
<dbReference type="FunFam" id="3.20.20.70:FF:000040">
    <property type="entry name" value="Lipoyl synthase"/>
    <property type="match status" value="1"/>
</dbReference>
<dbReference type="Gene3D" id="3.20.20.70">
    <property type="entry name" value="Aldolase class I"/>
    <property type="match status" value="1"/>
</dbReference>
<dbReference type="HAMAP" id="MF_00206">
    <property type="entry name" value="Lipoyl_synth"/>
    <property type="match status" value="1"/>
</dbReference>
<dbReference type="InterPro" id="IPR013785">
    <property type="entry name" value="Aldolase_TIM"/>
</dbReference>
<dbReference type="InterPro" id="IPR006638">
    <property type="entry name" value="Elp3/MiaA/NifB-like_rSAM"/>
</dbReference>
<dbReference type="InterPro" id="IPR031691">
    <property type="entry name" value="LIAS_N"/>
</dbReference>
<dbReference type="InterPro" id="IPR003698">
    <property type="entry name" value="Lipoyl_synth"/>
</dbReference>
<dbReference type="InterPro" id="IPR007197">
    <property type="entry name" value="rSAM"/>
</dbReference>
<dbReference type="NCBIfam" id="TIGR00510">
    <property type="entry name" value="lipA"/>
    <property type="match status" value="1"/>
</dbReference>
<dbReference type="NCBIfam" id="NF004019">
    <property type="entry name" value="PRK05481.1"/>
    <property type="match status" value="1"/>
</dbReference>
<dbReference type="NCBIfam" id="NF009544">
    <property type="entry name" value="PRK12928.1"/>
    <property type="match status" value="1"/>
</dbReference>
<dbReference type="PANTHER" id="PTHR10949">
    <property type="entry name" value="LIPOYL SYNTHASE"/>
    <property type="match status" value="1"/>
</dbReference>
<dbReference type="PANTHER" id="PTHR10949:SF0">
    <property type="entry name" value="LIPOYL SYNTHASE, MITOCHONDRIAL"/>
    <property type="match status" value="1"/>
</dbReference>
<dbReference type="Pfam" id="PF16881">
    <property type="entry name" value="LIAS_N"/>
    <property type="match status" value="1"/>
</dbReference>
<dbReference type="Pfam" id="PF04055">
    <property type="entry name" value="Radical_SAM"/>
    <property type="match status" value="1"/>
</dbReference>
<dbReference type="PIRSF" id="PIRSF005963">
    <property type="entry name" value="Lipoyl_synth"/>
    <property type="match status" value="1"/>
</dbReference>
<dbReference type="SFLD" id="SFLDF00271">
    <property type="entry name" value="lipoyl_synthase"/>
    <property type="match status" value="1"/>
</dbReference>
<dbReference type="SFLD" id="SFLDS00029">
    <property type="entry name" value="Radical_SAM"/>
    <property type="match status" value="1"/>
</dbReference>
<dbReference type="SMART" id="SM00729">
    <property type="entry name" value="Elp3"/>
    <property type="match status" value="1"/>
</dbReference>
<dbReference type="SUPFAM" id="SSF102114">
    <property type="entry name" value="Radical SAM enzymes"/>
    <property type="match status" value="1"/>
</dbReference>
<dbReference type="PROSITE" id="PS51918">
    <property type="entry name" value="RADICAL_SAM"/>
    <property type="match status" value="1"/>
</dbReference>